<keyword id="KW-1015">Disulfide bond</keyword>
<keyword id="KW-0325">Glycoprotein</keyword>
<keyword id="KW-0378">Hydrolase</keyword>
<keyword id="KW-0442">Lipid degradation</keyword>
<keyword id="KW-0443">Lipid metabolism</keyword>
<keyword id="KW-1185">Reference proteome</keyword>
<keyword id="KW-0964">Secreted</keyword>
<keyword id="KW-0732">Signal</keyword>
<keyword id="KW-0843">Virulence</keyword>
<dbReference type="EC" id="3.1.1.-" evidence="5"/>
<dbReference type="EC" id="3.1.1.3" evidence="5"/>
<dbReference type="EMBL" id="KR998252">
    <property type="protein sequence ID" value="AKR75009.1"/>
    <property type="molecule type" value="Genomic_DNA"/>
</dbReference>
<dbReference type="EMBL" id="CP033149">
    <property type="protein sequence ID" value="AYO42131.1"/>
    <property type="molecule type" value="Genomic_DNA"/>
</dbReference>
<dbReference type="SMR" id="A0A0K0VEZ4"/>
<dbReference type="ESTHER" id="9basi-a0a0k0vez4">
    <property type="family name" value="Fungal-Bact_LIP"/>
</dbReference>
<dbReference type="ESTHER" id="9basi-a0a3g2s244">
    <property type="family name" value="Fungal-Bact_LIP"/>
</dbReference>
<dbReference type="VEuPathDB" id="FungiDB:DNF11_1181"/>
<dbReference type="VEuPathDB" id="FungiDB:MRET_1179"/>
<dbReference type="OrthoDB" id="846912at5204"/>
<dbReference type="Proteomes" id="UP000269793">
    <property type="component" value="Chromosome ii"/>
</dbReference>
<dbReference type="GO" id="GO:0005576">
    <property type="term" value="C:extracellular region"/>
    <property type="evidence" value="ECO:0007669"/>
    <property type="project" value="UniProtKB-SubCell"/>
</dbReference>
<dbReference type="GO" id="GO:0004806">
    <property type="term" value="F:triacylglycerol lipase activity"/>
    <property type="evidence" value="ECO:0007669"/>
    <property type="project" value="InterPro"/>
</dbReference>
<dbReference type="GO" id="GO:0016042">
    <property type="term" value="P:lipid catabolic process"/>
    <property type="evidence" value="ECO:0007669"/>
    <property type="project" value="UniProtKB-KW"/>
</dbReference>
<dbReference type="Gene3D" id="1.10.260.130">
    <property type="match status" value="1"/>
</dbReference>
<dbReference type="Gene3D" id="3.40.50.1820">
    <property type="entry name" value="alpha/beta hydrolase"/>
    <property type="match status" value="1"/>
</dbReference>
<dbReference type="InterPro" id="IPR029058">
    <property type="entry name" value="AB_hydrolase_fold"/>
</dbReference>
<dbReference type="InterPro" id="IPR005152">
    <property type="entry name" value="Lipase_secreted"/>
</dbReference>
<dbReference type="PANTHER" id="PTHR34853">
    <property type="match status" value="1"/>
</dbReference>
<dbReference type="PANTHER" id="PTHR34853:SF1">
    <property type="entry name" value="LIPASE 5"/>
    <property type="match status" value="1"/>
</dbReference>
<dbReference type="Pfam" id="PF03583">
    <property type="entry name" value="LIP"/>
    <property type="match status" value="1"/>
</dbReference>
<dbReference type="PIRSF" id="PIRSF029171">
    <property type="entry name" value="Esterase_LipA"/>
    <property type="match status" value="1"/>
</dbReference>
<dbReference type="SUPFAM" id="SSF53474">
    <property type="entry name" value="alpha/beta-Hydrolases"/>
    <property type="match status" value="1"/>
</dbReference>
<dbReference type="PROSITE" id="PS51257">
    <property type="entry name" value="PROKAR_LIPOPROTEIN"/>
    <property type="match status" value="1"/>
</dbReference>
<accession>A0A0K0VEZ4</accession>
<accession>A0A3G2S244</accession>
<gene>
    <name evidence="6" type="primary">LIP3</name>
    <name evidence="7" type="synonym">LIP8</name>
    <name type="ORF">DNF11_1181</name>
</gene>
<feature type="signal peptide" evidence="3">
    <location>
        <begin position="1"/>
        <end position="21"/>
    </location>
</feature>
<feature type="chain" id="PRO_5005453315" description="Secreted triacylglycerol lipase LIP3">
    <location>
        <begin position="22"/>
        <end position="469"/>
    </location>
</feature>
<feature type="active site" description="Nucleophile" evidence="1">
    <location>
        <position position="205"/>
    </location>
</feature>
<feature type="active site" evidence="1">
    <location>
        <position position="352"/>
    </location>
</feature>
<feature type="active site" evidence="1">
    <location>
        <position position="386"/>
    </location>
</feature>
<feature type="glycosylation site" description="N-linked (GlcNAc...) asparagine" evidence="4">
    <location>
        <position position="238"/>
    </location>
</feature>
<feature type="disulfide bond" evidence="2">
    <location>
        <begin position="121"/>
        <end position="292"/>
    </location>
</feature>
<name>LIP3_MALR7</name>
<reference key="1">
    <citation type="journal article" date="2015" name="FEMS Yeast Res.">
        <title>Identification and characterization of lipases from Malassezia restricta, a causative agent of dandruff.</title>
        <authorList>
            <person name="Sommer B."/>
            <person name="Overy D.P."/>
            <person name="Kerr R.G."/>
        </authorList>
    </citation>
    <scope>NUCLEOTIDE SEQUENCE [GENOMIC DNA]</scope>
    <scope>FUNCTION</scope>
    <scope>CATALYTIC ACTIVITY</scope>
    <scope>SUBSTRATE SPECIFICITY</scope>
    <source>
        <strain>ATCC 96810 / NBRC 103918 / CBS 7877</strain>
    </source>
</reference>
<reference key="2">
    <citation type="journal article" date="2019" name="Microbiol. Resour. Announc.">
        <title>Complete Genome Sequence of Malassezia restricta CBS 7877, an Opportunist Pathogen Involved in Dandruff and Seborrheic Dermatitis.</title>
        <authorList>
            <person name="Morand S.C."/>
            <person name="Bertignac M."/>
            <person name="Iltis A."/>
            <person name="Kolder I.C.R.M."/>
            <person name="Pirovano W."/>
            <person name="Jourdain R."/>
            <person name="Clavaud C."/>
        </authorList>
    </citation>
    <scope>NUCLEOTIDE SEQUENCE [LARGE SCALE GENOMIC DNA]</scope>
    <source>
        <strain>ATCC 96810 / NBRC 103918 / CBS 7877</strain>
    </source>
</reference>
<proteinExistence type="evidence at protein level"/>
<sequence length="469" mass="51812">MVSLLWKFTLLCLFLLACTSAEVLERSSKPQTPDKDPFYDPPSGWEEKEHGTILRSRKVDIAFFQIAKVKYKEAYEILYRTSRSEEDQPSTTVTTVIVPENAKKDKLVNMNVYVDSNGARCAPSYVLQRNAKLATDPALSYQQVLFSTILDEGYILTVPDYQGPKRAFAAGRLEGHMAIDGILATLNLKELCLSKDTKVIGYGYSGGSIATGWAASLQPSYAPNLNMVGWTFGGTPANLTSTLEHLNGGTPAGFAVSGVAGIVDEYESVADWINDKLTHKGKHALDFVREHCTVGIVLRYPFTNILSDSFMKHGAQLLQSPIMKKVLGTLNMGVRPDETPKAPVYMFHAKLDEVIPYGSAHDAAKRWGDHGADILFEEFTGLVMGHASTELLNLPNVLLFMRDRMSGKPFIHGYEHKHTDNPLEDPGVIAKGFDALAETIKNAIDNTVGMGDKHMKAKIEQSRRRRIVS</sequence>
<evidence type="ECO:0000250" key="1">
    <source>
        <dbReference type="UniProtKB" id="A8QCW4"/>
    </source>
</evidence>
<evidence type="ECO:0000250" key="2">
    <source>
        <dbReference type="UniProtKB" id="W3VKA4"/>
    </source>
</evidence>
<evidence type="ECO:0000255" key="3"/>
<evidence type="ECO:0000255" key="4">
    <source>
        <dbReference type="PROSITE-ProRule" id="PRU00498"/>
    </source>
</evidence>
<evidence type="ECO:0000269" key="5">
    <source>
    </source>
</evidence>
<evidence type="ECO:0000303" key="6">
    <source>
    </source>
</evidence>
<evidence type="ECO:0000303" key="7">
    <source>
    </source>
</evidence>
<evidence type="ECO:0000305" key="8"/>
<evidence type="ECO:0000305" key="9">
    <source>
    </source>
</evidence>
<comment type="function">
    <text evidence="5 9">Secreted lipase that hydrolyzes acylglycerol lipids such as triacylglycerols and consequently releases free fatty acid (PubMed:26298017). Generates free oleic acid from the substrates mono- and diolein and hydrolyzes triolein in significant amounts (PubMed:26298017). Due to an absence of fatty acid synthase genes in Malassezia species, secretory lipases are essential for the yeast to generate free fatty acids from degradation of sebum and assimilate them as lipid sources for growth (Probable). Plays an essential role at the pathogen-host interface during disease progression (Probable). Performs also the reverse reaction to build diacyl- and triacyl- glycerols from monoacylglycerols (PubMed:26298017).</text>
</comment>
<comment type="catalytic activity">
    <reaction evidence="5">
        <text>a triacylglycerol + H2O = a diacylglycerol + a fatty acid + H(+)</text>
        <dbReference type="Rhea" id="RHEA:12044"/>
        <dbReference type="ChEBI" id="CHEBI:15377"/>
        <dbReference type="ChEBI" id="CHEBI:15378"/>
        <dbReference type="ChEBI" id="CHEBI:17855"/>
        <dbReference type="ChEBI" id="CHEBI:18035"/>
        <dbReference type="ChEBI" id="CHEBI:28868"/>
        <dbReference type="EC" id="3.1.1.3"/>
    </reaction>
</comment>
<comment type="catalytic activity">
    <reaction evidence="5">
        <text>a monoacylglycerol + H2O = glycerol + a fatty acid + H(+)</text>
        <dbReference type="Rhea" id="RHEA:15245"/>
        <dbReference type="ChEBI" id="CHEBI:15377"/>
        <dbReference type="ChEBI" id="CHEBI:15378"/>
        <dbReference type="ChEBI" id="CHEBI:17408"/>
        <dbReference type="ChEBI" id="CHEBI:17754"/>
        <dbReference type="ChEBI" id="CHEBI:28868"/>
    </reaction>
</comment>
<comment type="catalytic activity">
    <reaction evidence="5">
        <text>a diacylglycerol + H2O = a monoacylglycerol + a fatty acid + H(+)</text>
        <dbReference type="Rhea" id="RHEA:32731"/>
        <dbReference type="ChEBI" id="CHEBI:15377"/>
        <dbReference type="ChEBI" id="CHEBI:15378"/>
        <dbReference type="ChEBI" id="CHEBI:17408"/>
        <dbReference type="ChEBI" id="CHEBI:18035"/>
        <dbReference type="ChEBI" id="CHEBI:28868"/>
    </reaction>
</comment>
<comment type="subcellular location">
    <subcellularLocation>
        <location evidence="9">Secreted</location>
    </subcellularLocation>
</comment>
<comment type="similarity">
    <text evidence="8">Belongs to the AB hydrolase superfamily. Lipase family. Class Lip subfamily.</text>
</comment>
<organism>
    <name type="scientific">Malassezia restricta (strain ATCC 96810 / NBRC 103918 / CBS 7877)</name>
    <name type="common">Seborrheic dermatitis infection agent</name>
    <dbReference type="NCBI Taxonomy" id="425264"/>
    <lineage>
        <taxon>Eukaryota</taxon>
        <taxon>Fungi</taxon>
        <taxon>Dikarya</taxon>
        <taxon>Basidiomycota</taxon>
        <taxon>Ustilaginomycotina</taxon>
        <taxon>Malasseziomycetes</taxon>
        <taxon>Malasseziales</taxon>
        <taxon>Malasseziaceae</taxon>
        <taxon>Malassezia</taxon>
    </lineage>
</organism>
<protein>
    <recommendedName>
        <fullName evidence="6">Secreted triacylglycerol lipase LIP3</fullName>
        <ecNumber evidence="5">3.1.1.-</ecNumber>
        <ecNumber evidence="5">3.1.1.3</ecNumber>
    </recommendedName>
</protein>